<protein>
    <recommendedName>
        <fullName evidence="1">Large ribosomal subunit protein uL14</fullName>
    </recommendedName>
    <alternativeName>
        <fullName evidence="2">50S ribosomal protein L14</fullName>
    </alternativeName>
</protein>
<keyword id="KW-0687">Ribonucleoprotein</keyword>
<keyword id="KW-0689">Ribosomal protein</keyword>
<keyword id="KW-0694">RNA-binding</keyword>
<keyword id="KW-0699">rRNA-binding</keyword>
<dbReference type="EMBL" id="FM178379">
    <property type="protein sequence ID" value="CAQ78015.1"/>
    <property type="molecule type" value="Genomic_DNA"/>
</dbReference>
<dbReference type="RefSeq" id="WP_012549159.1">
    <property type="nucleotide sequence ID" value="NC_011312.1"/>
</dbReference>
<dbReference type="SMR" id="B6EPT5"/>
<dbReference type="KEGG" id="vsa:VSAL_I0330"/>
<dbReference type="eggNOG" id="COG0093">
    <property type="taxonomic scope" value="Bacteria"/>
</dbReference>
<dbReference type="HOGENOM" id="CLU_095071_2_1_6"/>
<dbReference type="Proteomes" id="UP000001730">
    <property type="component" value="Chromosome 1"/>
</dbReference>
<dbReference type="GO" id="GO:0022625">
    <property type="term" value="C:cytosolic large ribosomal subunit"/>
    <property type="evidence" value="ECO:0007669"/>
    <property type="project" value="TreeGrafter"/>
</dbReference>
<dbReference type="GO" id="GO:0070180">
    <property type="term" value="F:large ribosomal subunit rRNA binding"/>
    <property type="evidence" value="ECO:0007669"/>
    <property type="project" value="TreeGrafter"/>
</dbReference>
<dbReference type="GO" id="GO:0003735">
    <property type="term" value="F:structural constituent of ribosome"/>
    <property type="evidence" value="ECO:0007669"/>
    <property type="project" value="InterPro"/>
</dbReference>
<dbReference type="GO" id="GO:0006412">
    <property type="term" value="P:translation"/>
    <property type="evidence" value="ECO:0007669"/>
    <property type="project" value="UniProtKB-UniRule"/>
</dbReference>
<dbReference type="CDD" id="cd00337">
    <property type="entry name" value="Ribosomal_uL14"/>
    <property type="match status" value="1"/>
</dbReference>
<dbReference type="FunFam" id="2.40.150.20:FF:000001">
    <property type="entry name" value="50S ribosomal protein L14"/>
    <property type="match status" value="1"/>
</dbReference>
<dbReference type="Gene3D" id="2.40.150.20">
    <property type="entry name" value="Ribosomal protein L14"/>
    <property type="match status" value="1"/>
</dbReference>
<dbReference type="HAMAP" id="MF_01367">
    <property type="entry name" value="Ribosomal_uL14"/>
    <property type="match status" value="1"/>
</dbReference>
<dbReference type="InterPro" id="IPR000218">
    <property type="entry name" value="Ribosomal_uL14"/>
</dbReference>
<dbReference type="InterPro" id="IPR005745">
    <property type="entry name" value="Ribosomal_uL14_bac-type"/>
</dbReference>
<dbReference type="InterPro" id="IPR019972">
    <property type="entry name" value="Ribosomal_uL14_CS"/>
</dbReference>
<dbReference type="InterPro" id="IPR036853">
    <property type="entry name" value="Ribosomal_uL14_sf"/>
</dbReference>
<dbReference type="NCBIfam" id="TIGR01067">
    <property type="entry name" value="rplN_bact"/>
    <property type="match status" value="1"/>
</dbReference>
<dbReference type="PANTHER" id="PTHR11761">
    <property type="entry name" value="50S/60S RIBOSOMAL PROTEIN L14/L23"/>
    <property type="match status" value="1"/>
</dbReference>
<dbReference type="PANTHER" id="PTHR11761:SF3">
    <property type="entry name" value="LARGE RIBOSOMAL SUBUNIT PROTEIN UL14M"/>
    <property type="match status" value="1"/>
</dbReference>
<dbReference type="Pfam" id="PF00238">
    <property type="entry name" value="Ribosomal_L14"/>
    <property type="match status" value="1"/>
</dbReference>
<dbReference type="SMART" id="SM01374">
    <property type="entry name" value="Ribosomal_L14"/>
    <property type="match status" value="1"/>
</dbReference>
<dbReference type="SUPFAM" id="SSF50193">
    <property type="entry name" value="Ribosomal protein L14"/>
    <property type="match status" value="1"/>
</dbReference>
<dbReference type="PROSITE" id="PS00049">
    <property type="entry name" value="RIBOSOMAL_L14"/>
    <property type="match status" value="1"/>
</dbReference>
<accession>B6EPT5</accession>
<reference key="1">
    <citation type="journal article" date="2008" name="BMC Genomics">
        <title>The genome sequence of the fish pathogen Aliivibrio salmonicida strain LFI1238 shows extensive evidence of gene decay.</title>
        <authorList>
            <person name="Hjerde E."/>
            <person name="Lorentzen M.S."/>
            <person name="Holden M.T."/>
            <person name="Seeger K."/>
            <person name="Paulsen S."/>
            <person name="Bason N."/>
            <person name="Churcher C."/>
            <person name="Harris D."/>
            <person name="Norbertczak H."/>
            <person name="Quail M.A."/>
            <person name="Sanders S."/>
            <person name="Thurston S."/>
            <person name="Parkhill J."/>
            <person name="Willassen N.P."/>
            <person name="Thomson N.R."/>
        </authorList>
    </citation>
    <scope>NUCLEOTIDE SEQUENCE [LARGE SCALE GENOMIC DNA]</scope>
    <source>
        <strain>LFI1238</strain>
    </source>
</reference>
<gene>
    <name evidence="1" type="primary">rplN</name>
    <name type="ordered locus">VSAL_I0330</name>
</gene>
<organism>
    <name type="scientific">Aliivibrio salmonicida (strain LFI1238)</name>
    <name type="common">Vibrio salmonicida (strain LFI1238)</name>
    <dbReference type="NCBI Taxonomy" id="316275"/>
    <lineage>
        <taxon>Bacteria</taxon>
        <taxon>Pseudomonadati</taxon>
        <taxon>Pseudomonadota</taxon>
        <taxon>Gammaproteobacteria</taxon>
        <taxon>Vibrionales</taxon>
        <taxon>Vibrionaceae</taxon>
        <taxon>Aliivibrio</taxon>
    </lineage>
</organism>
<proteinExistence type="inferred from homology"/>
<evidence type="ECO:0000255" key="1">
    <source>
        <dbReference type="HAMAP-Rule" id="MF_01367"/>
    </source>
</evidence>
<evidence type="ECO:0000305" key="2"/>
<sequence length="123" mass="13580">MIQMQSTLDAADNSGARKVMCIKVLGGSHRRYAHIGDVIKVTVKEAIPRGKVKKGDVLKAVVVRTRKGVRRPDGSIIRFDRNACVLLNDTTEQPVGTRIFGPVTRELRNAKFMKIVSLAPEVL</sequence>
<feature type="chain" id="PRO_1000144214" description="Large ribosomal subunit protein uL14">
    <location>
        <begin position="1"/>
        <end position="123"/>
    </location>
</feature>
<comment type="function">
    <text evidence="1">Binds to 23S rRNA. Forms part of two intersubunit bridges in the 70S ribosome.</text>
</comment>
<comment type="subunit">
    <text evidence="1">Part of the 50S ribosomal subunit. Forms a cluster with proteins L3 and L19. In the 70S ribosome, L14 and L19 interact and together make contacts with the 16S rRNA in bridges B5 and B8.</text>
</comment>
<comment type="similarity">
    <text evidence="1">Belongs to the universal ribosomal protein uL14 family.</text>
</comment>
<name>RL14_ALISL</name>